<proteinExistence type="inferred from homology"/>
<protein>
    <recommendedName>
        <fullName>Uncharacterized protein MJ1066</fullName>
    </recommendedName>
</protein>
<reference key="1">
    <citation type="journal article" date="1996" name="Science">
        <title>Complete genome sequence of the methanogenic archaeon, Methanococcus jannaschii.</title>
        <authorList>
            <person name="Bult C.J."/>
            <person name="White O."/>
            <person name="Olsen G.J."/>
            <person name="Zhou L."/>
            <person name="Fleischmann R.D."/>
            <person name="Sutton G.G."/>
            <person name="Blake J.A."/>
            <person name="FitzGerald L.M."/>
            <person name="Clayton R.A."/>
            <person name="Gocayne J.D."/>
            <person name="Kerlavage A.R."/>
            <person name="Dougherty B.A."/>
            <person name="Tomb J.-F."/>
            <person name="Adams M.D."/>
            <person name="Reich C.I."/>
            <person name="Overbeek R."/>
            <person name="Kirkness E.F."/>
            <person name="Weinstock K.G."/>
            <person name="Merrick J.M."/>
            <person name="Glodek A."/>
            <person name="Scott J.L."/>
            <person name="Geoghagen N.S.M."/>
            <person name="Weidman J.F."/>
            <person name="Fuhrmann J.L."/>
            <person name="Nguyen D."/>
            <person name="Utterback T.R."/>
            <person name="Kelley J.M."/>
            <person name="Peterson J.D."/>
            <person name="Sadow P.W."/>
            <person name="Hanna M.C."/>
            <person name="Cotton M.D."/>
            <person name="Roberts K.M."/>
            <person name="Hurst M.A."/>
            <person name="Kaine B.P."/>
            <person name="Borodovsky M."/>
            <person name="Klenk H.-P."/>
            <person name="Fraser C.M."/>
            <person name="Smith H.O."/>
            <person name="Woese C.R."/>
            <person name="Venter J.C."/>
        </authorList>
    </citation>
    <scope>NUCLEOTIDE SEQUENCE [LARGE SCALE GENOMIC DNA]</scope>
    <source>
        <strain>ATCC 43067 / DSM 2661 / JAL-1 / JCM 10045 / NBRC 100440</strain>
    </source>
</reference>
<sequence>MIRESFLPPFRPCIGEEEINEVIDTLKSDWITMGPKTLKFEELFRNYIGSKFAISLNSCTAGLHLSLVALNIKDKDEVITTPYTFAATGNVIVHQRAKPVFVDIDKETYNINVEEIENAITERTKAIIPVHYAGHPCEMDEILKIARDYDLYVIEDAAHALGAEYKGKKIGTIGDTTSFSFYATKNITTGEGGMVTTDNEEIAEKIKILRLHGISRDAWKRYSSEGSWYYEIIECGYKYNMTDIQASIGIHQLKKAEIMRKRREEIAKIYNEEFENLEGLITPTIKKHVKHAWHLYPLLINIDRLKINRTKFIEELKKQNIGTSVHFIPLHLHPFYRKTFGYKKGDFPNAEWVYEREISLPIYPKMTDDDVIDVVNAVKKIVSENR</sequence>
<feature type="chain" id="PRO_0000110032" description="Uncharacterized protein MJ1066">
    <location>
        <begin position="1"/>
        <end position="386"/>
    </location>
</feature>
<feature type="modified residue" description="N6-(pyridoxal phosphate)lysine" evidence="1">
    <location>
        <position position="185"/>
    </location>
</feature>
<comment type="cofactor">
    <cofactor evidence="2">
        <name>pyridoxal 5'-phosphate</name>
        <dbReference type="ChEBI" id="CHEBI:597326"/>
    </cofactor>
</comment>
<comment type="similarity">
    <text evidence="2">Belongs to the DegT/DnrJ/EryC1 family.</text>
</comment>
<dbReference type="EMBL" id="L77117">
    <property type="protein sequence ID" value="AAB99069.1"/>
    <property type="molecule type" value="Genomic_DNA"/>
</dbReference>
<dbReference type="PIR" id="A64433">
    <property type="entry name" value="A64433"/>
</dbReference>
<dbReference type="RefSeq" id="WP_010870579.1">
    <property type="nucleotide sequence ID" value="NC_000909.1"/>
</dbReference>
<dbReference type="SMR" id="Q58466"/>
<dbReference type="FunCoup" id="Q58466">
    <property type="interactions" value="3"/>
</dbReference>
<dbReference type="STRING" id="243232.MJ_1066"/>
<dbReference type="PaxDb" id="243232-MJ_1066"/>
<dbReference type="EnsemblBacteria" id="AAB99069">
    <property type="protein sequence ID" value="AAB99069"/>
    <property type="gene ID" value="MJ_1066"/>
</dbReference>
<dbReference type="GeneID" id="1451963"/>
<dbReference type="KEGG" id="mja:MJ_1066"/>
<dbReference type="eggNOG" id="arCOG00118">
    <property type="taxonomic scope" value="Archaea"/>
</dbReference>
<dbReference type="HOGENOM" id="CLU_033332_7_2_2"/>
<dbReference type="InParanoid" id="Q58466"/>
<dbReference type="OrthoDB" id="10355at2157"/>
<dbReference type="PhylomeDB" id="Q58466"/>
<dbReference type="Proteomes" id="UP000000805">
    <property type="component" value="Chromosome"/>
</dbReference>
<dbReference type="GO" id="GO:0030170">
    <property type="term" value="F:pyridoxal phosphate binding"/>
    <property type="evidence" value="ECO:0000318"/>
    <property type="project" value="GO_Central"/>
</dbReference>
<dbReference type="GO" id="GO:0008483">
    <property type="term" value="F:transaminase activity"/>
    <property type="evidence" value="ECO:0000318"/>
    <property type="project" value="GO_Central"/>
</dbReference>
<dbReference type="GO" id="GO:0000271">
    <property type="term" value="P:polysaccharide biosynthetic process"/>
    <property type="evidence" value="ECO:0000318"/>
    <property type="project" value="GO_Central"/>
</dbReference>
<dbReference type="CDD" id="cd00616">
    <property type="entry name" value="AHBA_syn"/>
    <property type="match status" value="1"/>
</dbReference>
<dbReference type="FunFam" id="3.90.1150.10:FF:000030">
    <property type="entry name" value="UDP-4-amino-4-deoxy-L-arabinose--oxoglutarate aminotransferase"/>
    <property type="match status" value="1"/>
</dbReference>
<dbReference type="Gene3D" id="3.90.1150.10">
    <property type="entry name" value="Aspartate Aminotransferase, domain 1"/>
    <property type="match status" value="1"/>
</dbReference>
<dbReference type="Gene3D" id="3.40.640.10">
    <property type="entry name" value="Type I PLP-dependent aspartate aminotransferase-like (Major domain)"/>
    <property type="match status" value="1"/>
</dbReference>
<dbReference type="InterPro" id="IPR000653">
    <property type="entry name" value="DegT/StrS_aminotransferase"/>
</dbReference>
<dbReference type="InterPro" id="IPR020026">
    <property type="entry name" value="PseC"/>
</dbReference>
<dbReference type="InterPro" id="IPR015424">
    <property type="entry name" value="PyrdxlP-dep_Trfase"/>
</dbReference>
<dbReference type="InterPro" id="IPR015421">
    <property type="entry name" value="PyrdxlP-dep_Trfase_major"/>
</dbReference>
<dbReference type="InterPro" id="IPR015422">
    <property type="entry name" value="PyrdxlP-dep_Trfase_small"/>
</dbReference>
<dbReference type="NCBIfam" id="TIGR03588">
    <property type="entry name" value="PseC"/>
    <property type="match status" value="1"/>
</dbReference>
<dbReference type="PANTHER" id="PTHR30244:SF34">
    <property type="entry name" value="DTDP-4-AMINO-4,6-DIDEOXYGALACTOSE TRANSAMINASE"/>
    <property type="match status" value="1"/>
</dbReference>
<dbReference type="PANTHER" id="PTHR30244">
    <property type="entry name" value="TRANSAMINASE"/>
    <property type="match status" value="1"/>
</dbReference>
<dbReference type="Pfam" id="PF01041">
    <property type="entry name" value="DegT_DnrJ_EryC1"/>
    <property type="match status" value="1"/>
</dbReference>
<dbReference type="PIRSF" id="PIRSF000390">
    <property type="entry name" value="PLP_StrS"/>
    <property type="match status" value="1"/>
</dbReference>
<dbReference type="SUPFAM" id="SSF53383">
    <property type="entry name" value="PLP-dependent transferases"/>
    <property type="match status" value="1"/>
</dbReference>
<organism>
    <name type="scientific">Methanocaldococcus jannaschii (strain ATCC 43067 / DSM 2661 / JAL-1 / JCM 10045 / NBRC 100440)</name>
    <name type="common">Methanococcus jannaschii</name>
    <dbReference type="NCBI Taxonomy" id="243232"/>
    <lineage>
        <taxon>Archaea</taxon>
        <taxon>Methanobacteriati</taxon>
        <taxon>Methanobacteriota</taxon>
        <taxon>Methanomada group</taxon>
        <taxon>Methanococci</taxon>
        <taxon>Methanococcales</taxon>
        <taxon>Methanocaldococcaceae</taxon>
        <taxon>Methanocaldococcus</taxon>
    </lineage>
</organism>
<accession>Q58466</accession>
<gene>
    <name type="ordered locus">MJ1066</name>
</gene>
<name>Y1066_METJA</name>
<keyword id="KW-0663">Pyridoxal phosphate</keyword>
<keyword id="KW-1185">Reference proteome</keyword>
<evidence type="ECO:0000250" key="1"/>
<evidence type="ECO:0000305" key="2"/>